<reference key="1">
    <citation type="submission" date="2006-12" db="EMBL/GenBank/DDBJ databases">
        <title>Complete sequence of chromosome of Mycobacterium sp. KMS.</title>
        <authorList>
            <consortium name="US DOE Joint Genome Institute"/>
            <person name="Copeland A."/>
            <person name="Lucas S."/>
            <person name="Lapidus A."/>
            <person name="Barry K."/>
            <person name="Detter J.C."/>
            <person name="Glavina del Rio T."/>
            <person name="Hammon N."/>
            <person name="Israni S."/>
            <person name="Dalin E."/>
            <person name="Tice H."/>
            <person name="Pitluck S."/>
            <person name="Kiss H."/>
            <person name="Brettin T."/>
            <person name="Bruce D."/>
            <person name="Han C."/>
            <person name="Tapia R."/>
            <person name="Gilna P."/>
            <person name="Schmutz J."/>
            <person name="Larimer F."/>
            <person name="Land M."/>
            <person name="Hauser L."/>
            <person name="Kyrpides N."/>
            <person name="Mikhailova N."/>
            <person name="Miller C.D."/>
            <person name="Richardson P."/>
        </authorList>
    </citation>
    <scope>NUCLEOTIDE SEQUENCE [LARGE SCALE GENOMIC DNA]</scope>
    <source>
        <strain>KMS</strain>
    </source>
</reference>
<comment type="function">
    <text evidence="1">Catalyzes the ATP-dependent phosphorylation of L-homoserine to L-homoserine phosphate.</text>
</comment>
<comment type="catalytic activity">
    <reaction evidence="1">
        <text>L-homoserine + ATP = O-phospho-L-homoserine + ADP + H(+)</text>
        <dbReference type="Rhea" id="RHEA:13985"/>
        <dbReference type="ChEBI" id="CHEBI:15378"/>
        <dbReference type="ChEBI" id="CHEBI:30616"/>
        <dbReference type="ChEBI" id="CHEBI:57476"/>
        <dbReference type="ChEBI" id="CHEBI:57590"/>
        <dbReference type="ChEBI" id="CHEBI:456216"/>
        <dbReference type="EC" id="2.7.1.39"/>
    </reaction>
</comment>
<comment type="pathway">
    <text evidence="1">Amino-acid biosynthesis; L-threonine biosynthesis; L-threonine from L-aspartate: step 4/5.</text>
</comment>
<comment type="subcellular location">
    <subcellularLocation>
        <location evidence="1">Cytoplasm</location>
    </subcellularLocation>
</comment>
<comment type="similarity">
    <text evidence="1">Belongs to the GHMP kinase family. Homoserine kinase subfamily.</text>
</comment>
<name>KHSE_MYCSK</name>
<evidence type="ECO:0000255" key="1">
    <source>
        <dbReference type="HAMAP-Rule" id="MF_00384"/>
    </source>
</evidence>
<protein>
    <recommendedName>
        <fullName evidence="1">Homoserine kinase</fullName>
        <shortName evidence="1">HK</shortName>
        <shortName evidence="1">HSK</shortName>
        <ecNumber evidence="1">2.7.1.39</ecNumber>
    </recommendedName>
</protein>
<dbReference type="EC" id="2.7.1.39" evidence="1"/>
<dbReference type="EMBL" id="CP000518">
    <property type="protein sequence ID" value="ABL93160.1"/>
    <property type="molecule type" value="Genomic_DNA"/>
</dbReference>
<dbReference type="SMR" id="A1UK02"/>
<dbReference type="STRING" id="189918.Mkms_3968"/>
<dbReference type="KEGG" id="mkm:Mkms_3968"/>
<dbReference type="HOGENOM" id="CLU_041243_0_1_11"/>
<dbReference type="OrthoDB" id="9769912at2"/>
<dbReference type="UniPathway" id="UPA00050">
    <property type="reaction ID" value="UER00064"/>
</dbReference>
<dbReference type="GO" id="GO:0005737">
    <property type="term" value="C:cytoplasm"/>
    <property type="evidence" value="ECO:0007669"/>
    <property type="project" value="UniProtKB-SubCell"/>
</dbReference>
<dbReference type="GO" id="GO:0005524">
    <property type="term" value="F:ATP binding"/>
    <property type="evidence" value="ECO:0007669"/>
    <property type="project" value="UniProtKB-UniRule"/>
</dbReference>
<dbReference type="GO" id="GO:0004413">
    <property type="term" value="F:homoserine kinase activity"/>
    <property type="evidence" value="ECO:0007669"/>
    <property type="project" value="UniProtKB-UniRule"/>
</dbReference>
<dbReference type="GO" id="GO:0009088">
    <property type="term" value="P:threonine biosynthetic process"/>
    <property type="evidence" value="ECO:0007669"/>
    <property type="project" value="UniProtKB-UniRule"/>
</dbReference>
<dbReference type="Gene3D" id="3.30.230.10">
    <property type="match status" value="1"/>
</dbReference>
<dbReference type="Gene3D" id="3.30.70.890">
    <property type="entry name" value="GHMP kinase, C-terminal domain"/>
    <property type="match status" value="1"/>
</dbReference>
<dbReference type="HAMAP" id="MF_00384">
    <property type="entry name" value="Homoser_kinase"/>
    <property type="match status" value="1"/>
</dbReference>
<dbReference type="InterPro" id="IPR013750">
    <property type="entry name" value="GHMP_kinase_C_dom"/>
</dbReference>
<dbReference type="InterPro" id="IPR036554">
    <property type="entry name" value="GHMP_kinase_C_sf"/>
</dbReference>
<dbReference type="InterPro" id="IPR006204">
    <property type="entry name" value="GHMP_kinase_N_dom"/>
</dbReference>
<dbReference type="InterPro" id="IPR006203">
    <property type="entry name" value="GHMP_knse_ATP-bd_CS"/>
</dbReference>
<dbReference type="InterPro" id="IPR000870">
    <property type="entry name" value="Homoserine_kinase"/>
</dbReference>
<dbReference type="InterPro" id="IPR020568">
    <property type="entry name" value="Ribosomal_Su5_D2-typ_SF"/>
</dbReference>
<dbReference type="InterPro" id="IPR014721">
    <property type="entry name" value="Ribsml_uS5_D2-typ_fold_subgr"/>
</dbReference>
<dbReference type="NCBIfam" id="TIGR00191">
    <property type="entry name" value="thrB"/>
    <property type="match status" value="1"/>
</dbReference>
<dbReference type="PANTHER" id="PTHR20861:SF1">
    <property type="entry name" value="HOMOSERINE KINASE"/>
    <property type="match status" value="1"/>
</dbReference>
<dbReference type="PANTHER" id="PTHR20861">
    <property type="entry name" value="HOMOSERINE/4-DIPHOSPHOCYTIDYL-2-C-METHYL-D-ERYTHRITOL KINASE"/>
    <property type="match status" value="1"/>
</dbReference>
<dbReference type="Pfam" id="PF08544">
    <property type="entry name" value="GHMP_kinases_C"/>
    <property type="match status" value="1"/>
</dbReference>
<dbReference type="Pfam" id="PF00288">
    <property type="entry name" value="GHMP_kinases_N"/>
    <property type="match status" value="1"/>
</dbReference>
<dbReference type="PIRSF" id="PIRSF000676">
    <property type="entry name" value="Homoser_kin"/>
    <property type="match status" value="1"/>
</dbReference>
<dbReference type="PRINTS" id="PR00958">
    <property type="entry name" value="HOMSERKINASE"/>
</dbReference>
<dbReference type="SUPFAM" id="SSF55060">
    <property type="entry name" value="GHMP Kinase, C-terminal domain"/>
    <property type="match status" value="1"/>
</dbReference>
<dbReference type="SUPFAM" id="SSF54211">
    <property type="entry name" value="Ribosomal protein S5 domain 2-like"/>
    <property type="match status" value="1"/>
</dbReference>
<dbReference type="PROSITE" id="PS00627">
    <property type="entry name" value="GHMP_KINASES_ATP"/>
    <property type="match status" value="1"/>
</dbReference>
<gene>
    <name evidence="1" type="primary">thrB</name>
    <name type="ordered locus">Mkms_3968</name>
</gene>
<organism>
    <name type="scientific">Mycobacterium sp. (strain KMS)</name>
    <dbReference type="NCBI Taxonomy" id="189918"/>
    <lineage>
        <taxon>Bacteria</taxon>
        <taxon>Bacillati</taxon>
        <taxon>Actinomycetota</taxon>
        <taxon>Actinomycetes</taxon>
        <taxon>Mycobacteriales</taxon>
        <taxon>Mycobacteriaceae</taxon>
        <taxon>Mycobacterium</taxon>
    </lineage>
</organism>
<keyword id="KW-0028">Amino-acid biosynthesis</keyword>
<keyword id="KW-0067">ATP-binding</keyword>
<keyword id="KW-0963">Cytoplasm</keyword>
<keyword id="KW-0418">Kinase</keyword>
<keyword id="KW-0547">Nucleotide-binding</keyword>
<keyword id="KW-0791">Threonine biosynthesis</keyword>
<keyword id="KW-0808">Transferase</keyword>
<sequence length="314" mass="31814">MTQTLPAGLTATATVAASSANLGPGFDSLGLALSLYDEIVVETVDSGLTVTVEGEGAGQVALDSSHLVVRAIEAGLRATGCIAPGLVVRCRNDIPHSRGLGSSAAAVVGGLAAANGLVSQTDWTPLTVEQLIQLSSAFEGHPDNAAAAVLGGAVVTWTDGAGAQARYAAAPLRVHPDIHLFPAIPQQRSSTAETRVLLPDTVSHTDARFNLSRAALLVVALTERPDLLMAATEDVLHQPQRAAAMPASAEFLRVLRGCGVAAVLSGAGPAVIALSTEPVLPAEAVEFGIANGFTIAEMAVGDGVRWSTGVAAGR</sequence>
<accession>A1UK02</accession>
<feature type="chain" id="PRO_1000049149" description="Homoserine kinase">
    <location>
        <begin position="1"/>
        <end position="314"/>
    </location>
</feature>
<feature type="binding site" evidence="1">
    <location>
        <begin position="95"/>
        <end position="105"/>
    </location>
    <ligand>
        <name>ATP</name>
        <dbReference type="ChEBI" id="CHEBI:30616"/>
    </ligand>
</feature>
<proteinExistence type="inferred from homology"/>